<evidence type="ECO:0000255" key="1">
    <source>
        <dbReference type="HAMAP-Rule" id="MF_00176"/>
    </source>
</evidence>
<reference key="1">
    <citation type="journal article" date="2007" name="PLoS ONE">
        <title>Analysis of the neurotoxin complex genes in Clostridium botulinum A1-A4 and B1 strains: BoNT/A3, /Ba4 and /B1 clusters are located within plasmids.</title>
        <authorList>
            <person name="Smith T.J."/>
            <person name="Hill K.K."/>
            <person name="Foley B.T."/>
            <person name="Detter J.C."/>
            <person name="Munk A.C."/>
            <person name="Bruce D.C."/>
            <person name="Doggett N.A."/>
            <person name="Smith L.A."/>
            <person name="Marks J.D."/>
            <person name="Xie G."/>
            <person name="Brettin T.S."/>
        </authorList>
    </citation>
    <scope>NUCLEOTIDE SEQUENCE [LARGE SCALE GENOMIC DNA]</scope>
    <source>
        <strain>Okra / Type B1</strain>
    </source>
</reference>
<proteinExistence type="inferred from homology"/>
<gene>
    <name evidence="1" type="primary">serS</name>
    <name type="ordered locus">CLD_0805</name>
</gene>
<name>SYS_CLOBK</name>
<organism>
    <name type="scientific">Clostridium botulinum (strain Okra / Type B1)</name>
    <dbReference type="NCBI Taxonomy" id="498213"/>
    <lineage>
        <taxon>Bacteria</taxon>
        <taxon>Bacillati</taxon>
        <taxon>Bacillota</taxon>
        <taxon>Clostridia</taxon>
        <taxon>Eubacteriales</taxon>
        <taxon>Clostridiaceae</taxon>
        <taxon>Clostridium</taxon>
    </lineage>
</organism>
<accession>B1IDV4</accession>
<sequence>MLDLKRIRNNSNEIKEALNNRGEKFDVTVIDEVLKLDEERRNILVKVEVLKSKRNQVSSEVPKLKKEGKDVSNIVAEMKNLSEEIKGFDATLAKIDEKIQYIMLRIPNIPNPQVPDGETDEDNIEIRNWLEPTKFDFEPKAHWDIGTNLNILDFERAGKVTGSRFTFYKGLGARLERAVISYFLDTHTEKHGYTEILPPYMVNRTSMIGTGQLPKFEEDAFKISEDDYFLIPTAEVPVTNLYRDEILKGDELPLKHVAYSACFRSEAGSAGRDTRGLVRQHQFNKVELVKFTKPEQSYEELEKLTNDAETVLKELGIPYRVVRICKGDLGFTAALKYDLEVWMPSYNRYVEISSCSNFEDFQARRANIRYKEDAKAKPQYVHTLNGSGVAIGRTVAAILENYQSEDGSVTIPEVLRPYMGGREVIK</sequence>
<comment type="function">
    <text evidence="1">Catalyzes the attachment of serine to tRNA(Ser). Is also able to aminoacylate tRNA(Sec) with serine, to form the misacylated tRNA L-seryl-tRNA(Sec), which will be further converted into selenocysteinyl-tRNA(Sec).</text>
</comment>
<comment type="catalytic activity">
    <reaction evidence="1">
        <text>tRNA(Ser) + L-serine + ATP = L-seryl-tRNA(Ser) + AMP + diphosphate + H(+)</text>
        <dbReference type="Rhea" id="RHEA:12292"/>
        <dbReference type="Rhea" id="RHEA-COMP:9669"/>
        <dbReference type="Rhea" id="RHEA-COMP:9703"/>
        <dbReference type="ChEBI" id="CHEBI:15378"/>
        <dbReference type="ChEBI" id="CHEBI:30616"/>
        <dbReference type="ChEBI" id="CHEBI:33019"/>
        <dbReference type="ChEBI" id="CHEBI:33384"/>
        <dbReference type="ChEBI" id="CHEBI:78442"/>
        <dbReference type="ChEBI" id="CHEBI:78533"/>
        <dbReference type="ChEBI" id="CHEBI:456215"/>
        <dbReference type="EC" id="6.1.1.11"/>
    </reaction>
</comment>
<comment type="catalytic activity">
    <reaction evidence="1">
        <text>tRNA(Sec) + L-serine + ATP = L-seryl-tRNA(Sec) + AMP + diphosphate + H(+)</text>
        <dbReference type="Rhea" id="RHEA:42580"/>
        <dbReference type="Rhea" id="RHEA-COMP:9742"/>
        <dbReference type="Rhea" id="RHEA-COMP:10128"/>
        <dbReference type="ChEBI" id="CHEBI:15378"/>
        <dbReference type="ChEBI" id="CHEBI:30616"/>
        <dbReference type="ChEBI" id="CHEBI:33019"/>
        <dbReference type="ChEBI" id="CHEBI:33384"/>
        <dbReference type="ChEBI" id="CHEBI:78442"/>
        <dbReference type="ChEBI" id="CHEBI:78533"/>
        <dbReference type="ChEBI" id="CHEBI:456215"/>
        <dbReference type="EC" id="6.1.1.11"/>
    </reaction>
</comment>
<comment type="pathway">
    <text evidence="1">Aminoacyl-tRNA biosynthesis; selenocysteinyl-tRNA(Sec) biosynthesis; L-seryl-tRNA(Sec) from L-serine and tRNA(Sec): step 1/1.</text>
</comment>
<comment type="subunit">
    <text evidence="1">Homodimer. The tRNA molecule binds across the dimer.</text>
</comment>
<comment type="subcellular location">
    <subcellularLocation>
        <location evidence="1">Cytoplasm</location>
    </subcellularLocation>
</comment>
<comment type="domain">
    <text evidence="1">Consists of two distinct domains, a catalytic core and a N-terminal extension that is involved in tRNA binding.</text>
</comment>
<comment type="similarity">
    <text evidence="1">Belongs to the class-II aminoacyl-tRNA synthetase family. Type-1 seryl-tRNA synthetase subfamily.</text>
</comment>
<dbReference type="EC" id="6.1.1.11" evidence="1"/>
<dbReference type="EMBL" id="CP000939">
    <property type="protein sequence ID" value="ACA43663.1"/>
    <property type="molecule type" value="Genomic_DNA"/>
</dbReference>
<dbReference type="RefSeq" id="WP_003400096.1">
    <property type="nucleotide sequence ID" value="NC_010516.1"/>
</dbReference>
<dbReference type="SMR" id="B1IDV4"/>
<dbReference type="KEGG" id="cbb:CLD_0805"/>
<dbReference type="HOGENOM" id="CLU_023797_1_1_9"/>
<dbReference type="UniPathway" id="UPA00906">
    <property type="reaction ID" value="UER00895"/>
</dbReference>
<dbReference type="Proteomes" id="UP000008541">
    <property type="component" value="Chromosome"/>
</dbReference>
<dbReference type="GO" id="GO:0005737">
    <property type="term" value="C:cytoplasm"/>
    <property type="evidence" value="ECO:0007669"/>
    <property type="project" value="UniProtKB-SubCell"/>
</dbReference>
<dbReference type="GO" id="GO:0005524">
    <property type="term" value="F:ATP binding"/>
    <property type="evidence" value="ECO:0007669"/>
    <property type="project" value="UniProtKB-UniRule"/>
</dbReference>
<dbReference type="GO" id="GO:0140096">
    <property type="term" value="F:catalytic activity, acting on a protein"/>
    <property type="evidence" value="ECO:0007669"/>
    <property type="project" value="UniProtKB-ARBA"/>
</dbReference>
<dbReference type="GO" id="GO:0004828">
    <property type="term" value="F:serine-tRNA ligase activity"/>
    <property type="evidence" value="ECO:0007669"/>
    <property type="project" value="UniProtKB-UniRule"/>
</dbReference>
<dbReference type="GO" id="GO:0016740">
    <property type="term" value="F:transferase activity"/>
    <property type="evidence" value="ECO:0007669"/>
    <property type="project" value="UniProtKB-ARBA"/>
</dbReference>
<dbReference type="GO" id="GO:0016260">
    <property type="term" value="P:selenocysteine biosynthetic process"/>
    <property type="evidence" value="ECO:0007669"/>
    <property type="project" value="UniProtKB-UniRule"/>
</dbReference>
<dbReference type="GO" id="GO:0006434">
    <property type="term" value="P:seryl-tRNA aminoacylation"/>
    <property type="evidence" value="ECO:0007669"/>
    <property type="project" value="UniProtKB-UniRule"/>
</dbReference>
<dbReference type="CDD" id="cd00770">
    <property type="entry name" value="SerRS_core"/>
    <property type="match status" value="1"/>
</dbReference>
<dbReference type="Gene3D" id="3.30.930.10">
    <property type="entry name" value="Bira Bifunctional Protein, Domain 2"/>
    <property type="match status" value="1"/>
</dbReference>
<dbReference type="Gene3D" id="1.10.287.40">
    <property type="entry name" value="Serine-tRNA synthetase, tRNA binding domain"/>
    <property type="match status" value="1"/>
</dbReference>
<dbReference type="HAMAP" id="MF_00176">
    <property type="entry name" value="Ser_tRNA_synth_type1"/>
    <property type="match status" value="1"/>
</dbReference>
<dbReference type="InterPro" id="IPR002314">
    <property type="entry name" value="aa-tRNA-synt_IIb"/>
</dbReference>
<dbReference type="InterPro" id="IPR006195">
    <property type="entry name" value="aa-tRNA-synth_II"/>
</dbReference>
<dbReference type="InterPro" id="IPR045864">
    <property type="entry name" value="aa-tRNA-synth_II/BPL/LPL"/>
</dbReference>
<dbReference type="InterPro" id="IPR002317">
    <property type="entry name" value="Ser-tRNA-ligase_type_1"/>
</dbReference>
<dbReference type="InterPro" id="IPR015866">
    <property type="entry name" value="Ser-tRNA-synth_1_N"/>
</dbReference>
<dbReference type="InterPro" id="IPR042103">
    <property type="entry name" value="SerRS_1_N_sf"/>
</dbReference>
<dbReference type="InterPro" id="IPR033729">
    <property type="entry name" value="SerRS_core"/>
</dbReference>
<dbReference type="InterPro" id="IPR010978">
    <property type="entry name" value="tRNA-bd_arm"/>
</dbReference>
<dbReference type="NCBIfam" id="TIGR00414">
    <property type="entry name" value="serS"/>
    <property type="match status" value="1"/>
</dbReference>
<dbReference type="PANTHER" id="PTHR43697:SF1">
    <property type="entry name" value="SERINE--TRNA LIGASE"/>
    <property type="match status" value="1"/>
</dbReference>
<dbReference type="PANTHER" id="PTHR43697">
    <property type="entry name" value="SERYL-TRNA SYNTHETASE"/>
    <property type="match status" value="1"/>
</dbReference>
<dbReference type="Pfam" id="PF02403">
    <property type="entry name" value="Seryl_tRNA_N"/>
    <property type="match status" value="1"/>
</dbReference>
<dbReference type="Pfam" id="PF00587">
    <property type="entry name" value="tRNA-synt_2b"/>
    <property type="match status" value="1"/>
</dbReference>
<dbReference type="PIRSF" id="PIRSF001529">
    <property type="entry name" value="Ser-tRNA-synth_IIa"/>
    <property type="match status" value="1"/>
</dbReference>
<dbReference type="PRINTS" id="PR00981">
    <property type="entry name" value="TRNASYNTHSER"/>
</dbReference>
<dbReference type="SUPFAM" id="SSF55681">
    <property type="entry name" value="Class II aaRS and biotin synthetases"/>
    <property type="match status" value="1"/>
</dbReference>
<dbReference type="SUPFAM" id="SSF46589">
    <property type="entry name" value="tRNA-binding arm"/>
    <property type="match status" value="1"/>
</dbReference>
<dbReference type="PROSITE" id="PS50862">
    <property type="entry name" value="AA_TRNA_LIGASE_II"/>
    <property type="match status" value="1"/>
</dbReference>
<feature type="chain" id="PRO_1000098053" description="Serine--tRNA ligase">
    <location>
        <begin position="1"/>
        <end position="426"/>
    </location>
</feature>
<feature type="binding site" evidence="1">
    <location>
        <begin position="233"/>
        <end position="235"/>
    </location>
    <ligand>
        <name>L-serine</name>
        <dbReference type="ChEBI" id="CHEBI:33384"/>
    </ligand>
</feature>
<feature type="binding site" evidence="1">
    <location>
        <begin position="264"/>
        <end position="266"/>
    </location>
    <ligand>
        <name>ATP</name>
        <dbReference type="ChEBI" id="CHEBI:30616"/>
    </ligand>
</feature>
<feature type="binding site" evidence="1">
    <location>
        <position position="287"/>
    </location>
    <ligand>
        <name>L-serine</name>
        <dbReference type="ChEBI" id="CHEBI:33384"/>
    </ligand>
</feature>
<feature type="binding site" evidence="1">
    <location>
        <begin position="351"/>
        <end position="354"/>
    </location>
    <ligand>
        <name>ATP</name>
        <dbReference type="ChEBI" id="CHEBI:30616"/>
    </ligand>
</feature>
<feature type="binding site" evidence="1">
    <location>
        <position position="387"/>
    </location>
    <ligand>
        <name>L-serine</name>
        <dbReference type="ChEBI" id="CHEBI:33384"/>
    </ligand>
</feature>
<protein>
    <recommendedName>
        <fullName evidence="1">Serine--tRNA ligase</fullName>
        <ecNumber evidence="1">6.1.1.11</ecNumber>
    </recommendedName>
    <alternativeName>
        <fullName evidence="1">Seryl-tRNA synthetase</fullName>
        <shortName evidence="1">SerRS</shortName>
    </alternativeName>
    <alternativeName>
        <fullName evidence="1">Seryl-tRNA(Ser/Sec) synthetase</fullName>
    </alternativeName>
</protein>
<keyword id="KW-0030">Aminoacyl-tRNA synthetase</keyword>
<keyword id="KW-0067">ATP-binding</keyword>
<keyword id="KW-0963">Cytoplasm</keyword>
<keyword id="KW-0436">Ligase</keyword>
<keyword id="KW-0547">Nucleotide-binding</keyword>
<keyword id="KW-0648">Protein biosynthesis</keyword>